<proteinExistence type="evidence at protein level"/>
<protein>
    <recommendedName>
        <fullName>UPF0336 protein Rv0504c</fullName>
    </recommendedName>
</protein>
<reference key="1">
    <citation type="journal article" date="1998" name="Nature">
        <title>Deciphering the biology of Mycobacterium tuberculosis from the complete genome sequence.</title>
        <authorList>
            <person name="Cole S.T."/>
            <person name="Brosch R."/>
            <person name="Parkhill J."/>
            <person name="Garnier T."/>
            <person name="Churcher C.M."/>
            <person name="Harris D.E."/>
            <person name="Gordon S.V."/>
            <person name="Eiglmeier K."/>
            <person name="Gas S."/>
            <person name="Barry C.E. III"/>
            <person name="Tekaia F."/>
            <person name="Badcock K."/>
            <person name="Basham D."/>
            <person name="Brown D."/>
            <person name="Chillingworth T."/>
            <person name="Connor R."/>
            <person name="Davies R.M."/>
            <person name="Devlin K."/>
            <person name="Feltwell T."/>
            <person name="Gentles S."/>
            <person name="Hamlin N."/>
            <person name="Holroyd S."/>
            <person name="Hornsby T."/>
            <person name="Jagels K."/>
            <person name="Krogh A."/>
            <person name="McLean J."/>
            <person name="Moule S."/>
            <person name="Murphy L.D."/>
            <person name="Oliver S."/>
            <person name="Osborne J."/>
            <person name="Quail M.A."/>
            <person name="Rajandream M.A."/>
            <person name="Rogers J."/>
            <person name="Rutter S."/>
            <person name="Seeger K."/>
            <person name="Skelton S."/>
            <person name="Squares S."/>
            <person name="Squares R."/>
            <person name="Sulston J.E."/>
            <person name="Taylor K."/>
            <person name="Whitehead S."/>
            <person name="Barrell B.G."/>
        </authorList>
    </citation>
    <scope>NUCLEOTIDE SEQUENCE [LARGE SCALE GENOMIC DNA]</scope>
    <source>
        <strain>ATCC 25618 / H37Rv</strain>
    </source>
</reference>
<reference key="2">
    <citation type="journal article" date="2011" name="Mol. Cell. Proteomics">
        <title>Proteogenomic analysis of Mycobacterium tuberculosis by high resolution mass spectrometry.</title>
        <authorList>
            <person name="Kelkar D.S."/>
            <person name="Kumar D."/>
            <person name="Kumar P."/>
            <person name="Balakrishnan L."/>
            <person name="Muthusamy B."/>
            <person name="Yadav A.K."/>
            <person name="Shrivastava P."/>
            <person name="Marimuthu A."/>
            <person name="Anand S."/>
            <person name="Sundaram H."/>
            <person name="Kingsbury R."/>
            <person name="Harsha H.C."/>
            <person name="Nair B."/>
            <person name="Prasad T.S."/>
            <person name="Chauhan D.S."/>
            <person name="Katoch K."/>
            <person name="Katoch V.M."/>
            <person name="Kumar P."/>
            <person name="Chaerkady R."/>
            <person name="Ramachandran S."/>
            <person name="Dash D."/>
            <person name="Pandey A."/>
        </authorList>
    </citation>
    <scope>ACETYLATION [LARGE SCALE ANALYSIS] AT THR-2</scope>
    <scope>CLEAVAGE OF INITIATOR METHIONINE [LARGE SCALE ANALYSIS]</scope>
    <scope>IDENTIFICATION BY MASS SPECTROMETRY [LARGE SCALE ANALYSIS]</scope>
    <source>
        <strain>ATCC 25618 / H37Rv</strain>
    </source>
</reference>
<sequence length="166" mass="18360">MTVPEEAQTLIGKHYRAPDHFLVGREKIREFAVAVKDDHPTHYSEPDAAAAGYPALVAPLTFLAIAGRRVQLEIFTKFNIPINIARVFHRDQKFRFHRPILANDKLYFDTYLDSVIESHGTVLAEIRSEVTDAEGKPVVTSVVTMLGEAAHHEADADATVAAIASI</sequence>
<keyword id="KW-0002">3D-structure</keyword>
<keyword id="KW-0007">Acetylation</keyword>
<keyword id="KW-1185">Reference proteome</keyword>
<feature type="initiator methionine" description="Removed" evidence="2">
    <location>
        <position position="1"/>
    </location>
</feature>
<feature type="chain" id="PRO_0000216142" description="UPF0336 protein Rv0504c">
    <location>
        <begin position="2"/>
        <end position="166"/>
    </location>
</feature>
<feature type="domain" description="MaoC-like">
    <location>
        <begin position="8"/>
        <end position="131"/>
    </location>
</feature>
<feature type="modified residue" description="N-acetylthreonine" evidence="2">
    <location>
        <position position="2"/>
    </location>
</feature>
<name>Y504_MYCTU</name>
<organism>
    <name type="scientific">Mycobacterium tuberculosis (strain ATCC 25618 / H37Rv)</name>
    <dbReference type="NCBI Taxonomy" id="83332"/>
    <lineage>
        <taxon>Bacteria</taxon>
        <taxon>Bacillati</taxon>
        <taxon>Actinomycetota</taxon>
        <taxon>Actinomycetes</taxon>
        <taxon>Mycobacteriales</taxon>
        <taxon>Mycobacteriaceae</taxon>
        <taxon>Mycobacterium</taxon>
        <taxon>Mycobacterium tuberculosis complex</taxon>
    </lineage>
</organism>
<dbReference type="EMBL" id="AL123456">
    <property type="protein sequence ID" value="CCP43241.1"/>
    <property type="molecule type" value="Genomic_DNA"/>
</dbReference>
<dbReference type="PIR" id="C70746">
    <property type="entry name" value="C70746"/>
</dbReference>
<dbReference type="RefSeq" id="NP_215018.1">
    <property type="nucleotide sequence ID" value="NC_000962.3"/>
</dbReference>
<dbReference type="RefSeq" id="WP_003402626.1">
    <property type="nucleotide sequence ID" value="NZ_NVQJ01000002.1"/>
</dbReference>
<dbReference type="PDB" id="8PWZ">
    <property type="method" value="X-ray"/>
    <property type="resolution" value="2.00 A"/>
    <property type="chains" value="A=1-166"/>
</dbReference>
<dbReference type="PDBsum" id="8PWZ"/>
<dbReference type="SMR" id="P9WFK3"/>
<dbReference type="STRING" id="83332.Rv0504c"/>
<dbReference type="iPTMnet" id="P9WFK3"/>
<dbReference type="PaxDb" id="83332-Rv0504c"/>
<dbReference type="DNASU" id="887268"/>
<dbReference type="GeneID" id="887268"/>
<dbReference type="KEGG" id="mtu:Rv0504c"/>
<dbReference type="KEGG" id="mtv:RVBD_0504c"/>
<dbReference type="TubercuList" id="Rv0504c"/>
<dbReference type="eggNOG" id="COG2030">
    <property type="taxonomic scope" value="Bacteria"/>
</dbReference>
<dbReference type="InParanoid" id="P9WFK3"/>
<dbReference type="OrthoDB" id="5415111at2"/>
<dbReference type="PhylomeDB" id="P9WFK3"/>
<dbReference type="PHI-base" id="PHI:9918"/>
<dbReference type="Proteomes" id="UP000001584">
    <property type="component" value="Chromosome"/>
</dbReference>
<dbReference type="GO" id="GO:0009274">
    <property type="term" value="C:peptidoglycan-based cell wall"/>
    <property type="evidence" value="ECO:0007005"/>
    <property type="project" value="MTBBASE"/>
</dbReference>
<dbReference type="GO" id="GO:0005886">
    <property type="term" value="C:plasma membrane"/>
    <property type="evidence" value="ECO:0007005"/>
    <property type="project" value="MTBBASE"/>
</dbReference>
<dbReference type="GO" id="GO:0019171">
    <property type="term" value="F:(3R)-hydroxyacyl-[acyl-carrier-protein] dehydratase activity"/>
    <property type="evidence" value="ECO:0000318"/>
    <property type="project" value="GO_Central"/>
</dbReference>
<dbReference type="GO" id="GO:0006633">
    <property type="term" value="P:fatty acid biosynthetic process"/>
    <property type="evidence" value="ECO:0000318"/>
    <property type="project" value="GO_Central"/>
</dbReference>
<dbReference type="CDD" id="cd03441">
    <property type="entry name" value="R_hydratase_like"/>
    <property type="match status" value="1"/>
</dbReference>
<dbReference type="Gene3D" id="3.10.129.10">
    <property type="entry name" value="Hotdog Thioesterase"/>
    <property type="match status" value="1"/>
</dbReference>
<dbReference type="HAMAP" id="MF_00799">
    <property type="entry name" value="UPF0336"/>
    <property type="match status" value="1"/>
</dbReference>
<dbReference type="InterPro" id="IPR039569">
    <property type="entry name" value="FAS1-like_DH_region"/>
</dbReference>
<dbReference type="InterPro" id="IPR016709">
    <property type="entry name" value="HadA-like"/>
</dbReference>
<dbReference type="InterPro" id="IPR029069">
    <property type="entry name" value="HotDog_dom_sf"/>
</dbReference>
<dbReference type="InterPro" id="IPR050965">
    <property type="entry name" value="UPF0336/Enoyl-CoA_hydratase"/>
</dbReference>
<dbReference type="PANTHER" id="PTHR43437:SF3">
    <property type="entry name" value="HYDROXYACYL-THIOESTER DEHYDRATASE TYPE 2, MITOCHONDRIAL"/>
    <property type="match status" value="1"/>
</dbReference>
<dbReference type="PANTHER" id="PTHR43437">
    <property type="entry name" value="HYDROXYACYL-THIOESTER DEHYDRATASE TYPE 2, MITOCHONDRIAL-RELATED"/>
    <property type="match status" value="1"/>
</dbReference>
<dbReference type="Pfam" id="PF13452">
    <property type="entry name" value="FAS1_DH_region"/>
    <property type="match status" value="1"/>
</dbReference>
<dbReference type="PIRSF" id="PIRSF018072">
    <property type="entry name" value="UCP018072"/>
    <property type="match status" value="1"/>
</dbReference>
<dbReference type="SUPFAM" id="SSF54637">
    <property type="entry name" value="Thioesterase/thiol ester dehydrase-isomerase"/>
    <property type="match status" value="1"/>
</dbReference>
<gene>
    <name type="ordered locus">Rv0504c</name>
    <name type="ORF">MTCY20G9.31c</name>
</gene>
<accession>P9WFK3</accession>
<accession>L0T3Y8</accession>
<accession>P64725</accession>
<accession>Q11168</accession>
<comment type="similarity">
    <text evidence="1">Belongs to the UPF0336 family.</text>
</comment>
<evidence type="ECO:0000305" key="1"/>
<evidence type="ECO:0007744" key="2">
    <source>
    </source>
</evidence>